<reference key="1">
    <citation type="journal article" date="2009" name="Appl. Environ. Microbiol.">
        <title>Three genomes from the phylum Acidobacteria provide insight into the lifestyles of these microorganisms in soils.</title>
        <authorList>
            <person name="Ward N.L."/>
            <person name="Challacombe J.F."/>
            <person name="Janssen P.H."/>
            <person name="Henrissat B."/>
            <person name="Coutinho P.M."/>
            <person name="Wu M."/>
            <person name="Xie G."/>
            <person name="Haft D.H."/>
            <person name="Sait M."/>
            <person name="Badger J."/>
            <person name="Barabote R.D."/>
            <person name="Bradley B."/>
            <person name="Brettin T.S."/>
            <person name="Brinkac L.M."/>
            <person name="Bruce D."/>
            <person name="Creasy T."/>
            <person name="Daugherty S.C."/>
            <person name="Davidsen T.M."/>
            <person name="DeBoy R.T."/>
            <person name="Detter J.C."/>
            <person name="Dodson R.J."/>
            <person name="Durkin A.S."/>
            <person name="Ganapathy A."/>
            <person name="Gwinn-Giglio M."/>
            <person name="Han C.S."/>
            <person name="Khouri H."/>
            <person name="Kiss H."/>
            <person name="Kothari S.P."/>
            <person name="Madupu R."/>
            <person name="Nelson K.E."/>
            <person name="Nelson W.C."/>
            <person name="Paulsen I."/>
            <person name="Penn K."/>
            <person name="Ren Q."/>
            <person name="Rosovitz M.J."/>
            <person name="Selengut J.D."/>
            <person name="Shrivastava S."/>
            <person name="Sullivan S.A."/>
            <person name="Tapia R."/>
            <person name="Thompson L.S."/>
            <person name="Watkins K.L."/>
            <person name="Yang Q."/>
            <person name="Yu C."/>
            <person name="Zafar N."/>
            <person name="Zhou L."/>
            <person name="Kuske C.R."/>
        </authorList>
    </citation>
    <scope>NUCLEOTIDE SEQUENCE [LARGE SCALE GENOMIC DNA]</scope>
    <source>
        <strain>Ellin6076</strain>
    </source>
</reference>
<sequence>MSSFIQNQFEQNFITTNVDHVFNWARKSALWPLTFGLACCAIEMIASSTSRFDIARFGAEVFRPSPRQSDLMIVAGTVTLKMAPVLKRIWDQMPDPKWCISMGACSSVGGPFNTYAVLQGVDKIVPVDVYVTGCPPRPENLFYALLKLQDKIDTMTTLVKRPTEVRLDETMLEEFKQQIRIAQIQNPA</sequence>
<gene>
    <name evidence="1" type="primary">nuoB1</name>
    <name type="ordered locus">Acid_3779</name>
</gene>
<proteinExistence type="inferred from homology"/>
<comment type="function">
    <text evidence="1">NDH-1 shuttles electrons from NADH, via FMN and iron-sulfur (Fe-S) centers, to quinones in the respiratory chain. The immediate electron acceptor for the enzyme in this species is believed to be ubiquinone. Couples the redox reaction to proton translocation (for every two electrons transferred, four hydrogen ions are translocated across the cytoplasmic membrane), and thus conserves the redox energy in a proton gradient.</text>
</comment>
<comment type="catalytic activity">
    <reaction evidence="1">
        <text>a quinone + NADH + 5 H(+)(in) = a quinol + NAD(+) + 4 H(+)(out)</text>
        <dbReference type="Rhea" id="RHEA:57888"/>
        <dbReference type="ChEBI" id="CHEBI:15378"/>
        <dbReference type="ChEBI" id="CHEBI:24646"/>
        <dbReference type="ChEBI" id="CHEBI:57540"/>
        <dbReference type="ChEBI" id="CHEBI:57945"/>
        <dbReference type="ChEBI" id="CHEBI:132124"/>
    </reaction>
</comment>
<comment type="cofactor">
    <cofactor evidence="1">
        <name>[4Fe-4S] cluster</name>
        <dbReference type="ChEBI" id="CHEBI:49883"/>
    </cofactor>
    <text evidence="1">Binds 1 [4Fe-4S] cluster.</text>
</comment>
<comment type="subunit">
    <text evidence="1">NDH-1 is composed of 14 different subunits. Subunits NuoB, C, D, E, F, and G constitute the peripheral sector of the complex.</text>
</comment>
<comment type="subcellular location">
    <subcellularLocation>
        <location evidence="1">Cell inner membrane</location>
        <topology evidence="1">Peripheral membrane protein</topology>
        <orientation evidence="1">Cytoplasmic side</orientation>
    </subcellularLocation>
</comment>
<comment type="similarity">
    <text evidence="1">Belongs to the complex I 20 kDa subunit family.</text>
</comment>
<organism>
    <name type="scientific">Solibacter usitatus (strain Ellin6076)</name>
    <dbReference type="NCBI Taxonomy" id="234267"/>
    <lineage>
        <taxon>Bacteria</taxon>
        <taxon>Pseudomonadati</taxon>
        <taxon>Acidobacteriota</taxon>
        <taxon>Terriglobia</taxon>
        <taxon>Bryobacterales</taxon>
        <taxon>Solibacteraceae</taxon>
        <taxon>Candidatus Solibacter</taxon>
    </lineage>
</organism>
<feature type="chain" id="PRO_0000376382" description="NADH-quinone oxidoreductase subunit B 1">
    <location>
        <begin position="1"/>
        <end position="188"/>
    </location>
</feature>
<feature type="binding site" evidence="1">
    <location>
        <position position="39"/>
    </location>
    <ligand>
        <name>[4Fe-4S] cluster</name>
        <dbReference type="ChEBI" id="CHEBI:49883"/>
    </ligand>
</feature>
<feature type="binding site" evidence="1">
    <location>
        <position position="40"/>
    </location>
    <ligand>
        <name>[4Fe-4S] cluster</name>
        <dbReference type="ChEBI" id="CHEBI:49883"/>
    </ligand>
</feature>
<feature type="binding site" evidence="1">
    <location>
        <position position="105"/>
    </location>
    <ligand>
        <name>[4Fe-4S] cluster</name>
        <dbReference type="ChEBI" id="CHEBI:49883"/>
    </ligand>
</feature>
<feature type="binding site" evidence="1">
    <location>
        <position position="134"/>
    </location>
    <ligand>
        <name>[4Fe-4S] cluster</name>
        <dbReference type="ChEBI" id="CHEBI:49883"/>
    </ligand>
</feature>
<name>NUOB1_SOLUE</name>
<dbReference type="EC" id="7.1.1.-" evidence="1"/>
<dbReference type="EMBL" id="CP000473">
    <property type="protein sequence ID" value="ABJ84749.1"/>
    <property type="molecule type" value="Genomic_DNA"/>
</dbReference>
<dbReference type="SMR" id="Q020B6"/>
<dbReference type="FunCoup" id="Q020B6">
    <property type="interactions" value="455"/>
</dbReference>
<dbReference type="STRING" id="234267.Acid_3779"/>
<dbReference type="KEGG" id="sus:Acid_3779"/>
<dbReference type="eggNOG" id="COG0377">
    <property type="taxonomic scope" value="Bacteria"/>
</dbReference>
<dbReference type="HOGENOM" id="CLU_055737_7_3_0"/>
<dbReference type="InParanoid" id="Q020B6"/>
<dbReference type="OrthoDB" id="9786737at2"/>
<dbReference type="GO" id="GO:0005886">
    <property type="term" value="C:plasma membrane"/>
    <property type="evidence" value="ECO:0007669"/>
    <property type="project" value="UniProtKB-SubCell"/>
</dbReference>
<dbReference type="GO" id="GO:0045271">
    <property type="term" value="C:respiratory chain complex I"/>
    <property type="evidence" value="ECO:0007669"/>
    <property type="project" value="TreeGrafter"/>
</dbReference>
<dbReference type="GO" id="GO:0051539">
    <property type="term" value="F:4 iron, 4 sulfur cluster binding"/>
    <property type="evidence" value="ECO:0007669"/>
    <property type="project" value="UniProtKB-KW"/>
</dbReference>
<dbReference type="GO" id="GO:0005506">
    <property type="term" value="F:iron ion binding"/>
    <property type="evidence" value="ECO:0007669"/>
    <property type="project" value="UniProtKB-UniRule"/>
</dbReference>
<dbReference type="GO" id="GO:0008137">
    <property type="term" value="F:NADH dehydrogenase (ubiquinone) activity"/>
    <property type="evidence" value="ECO:0007669"/>
    <property type="project" value="InterPro"/>
</dbReference>
<dbReference type="GO" id="GO:0050136">
    <property type="term" value="F:NADH:ubiquinone reductase (non-electrogenic) activity"/>
    <property type="evidence" value="ECO:0007669"/>
    <property type="project" value="UniProtKB-UniRule"/>
</dbReference>
<dbReference type="GO" id="GO:0048038">
    <property type="term" value="F:quinone binding"/>
    <property type="evidence" value="ECO:0007669"/>
    <property type="project" value="UniProtKB-KW"/>
</dbReference>
<dbReference type="GO" id="GO:0009060">
    <property type="term" value="P:aerobic respiration"/>
    <property type="evidence" value="ECO:0007669"/>
    <property type="project" value="TreeGrafter"/>
</dbReference>
<dbReference type="GO" id="GO:0015990">
    <property type="term" value="P:electron transport coupled proton transport"/>
    <property type="evidence" value="ECO:0007669"/>
    <property type="project" value="TreeGrafter"/>
</dbReference>
<dbReference type="FunFam" id="3.40.50.12280:FF:000002">
    <property type="entry name" value="NADH-quinone oxidoreductase subunit B"/>
    <property type="match status" value="1"/>
</dbReference>
<dbReference type="Gene3D" id="3.40.50.12280">
    <property type="match status" value="1"/>
</dbReference>
<dbReference type="HAMAP" id="MF_01356">
    <property type="entry name" value="NDH1_NuoB"/>
    <property type="match status" value="1"/>
</dbReference>
<dbReference type="InterPro" id="IPR006137">
    <property type="entry name" value="NADH_UbQ_OxRdtase-like_20kDa"/>
</dbReference>
<dbReference type="InterPro" id="IPR006138">
    <property type="entry name" value="NADH_UQ_OxRdtase_20Kd_su"/>
</dbReference>
<dbReference type="NCBIfam" id="TIGR01957">
    <property type="entry name" value="nuoB_fam"/>
    <property type="match status" value="1"/>
</dbReference>
<dbReference type="NCBIfam" id="NF005012">
    <property type="entry name" value="PRK06411.1"/>
    <property type="match status" value="1"/>
</dbReference>
<dbReference type="PANTHER" id="PTHR11995">
    <property type="entry name" value="NADH DEHYDROGENASE"/>
    <property type="match status" value="1"/>
</dbReference>
<dbReference type="PANTHER" id="PTHR11995:SF14">
    <property type="entry name" value="NADH DEHYDROGENASE [UBIQUINONE] IRON-SULFUR PROTEIN 7, MITOCHONDRIAL"/>
    <property type="match status" value="1"/>
</dbReference>
<dbReference type="Pfam" id="PF01058">
    <property type="entry name" value="Oxidored_q6"/>
    <property type="match status" value="1"/>
</dbReference>
<dbReference type="SUPFAM" id="SSF56770">
    <property type="entry name" value="HydA/Nqo6-like"/>
    <property type="match status" value="1"/>
</dbReference>
<keyword id="KW-0004">4Fe-4S</keyword>
<keyword id="KW-0997">Cell inner membrane</keyword>
<keyword id="KW-1003">Cell membrane</keyword>
<keyword id="KW-0408">Iron</keyword>
<keyword id="KW-0411">Iron-sulfur</keyword>
<keyword id="KW-0472">Membrane</keyword>
<keyword id="KW-0479">Metal-binding</keyword>
<keyword id="KW-0520">NAD</keyword>
<keyword id="KW-0874">Quinone</keyword>
<keyword id="KW-1278">Translocase</keyword>
<keyword id="KW-0813">Transport</keyword>
<keyword id="KW-0830">Ubiquinone</keyword>
<protein>
    <recommendedName>
        <fullName evidence="1">NADH-quinone oxidoreductase subunit B 1</fullName>
        <ecNumber evidence="1">7.1.1.-</ecNumber>
    </recommendedName>
    <alternativeName>
        <fullName evidence="1">NADH dehydrogenase I subunit B 1</fullName>
    </alternativeName>
    <alternativeName>
        <fullName evidence="1">NDH-1 subunit B 1</fullName>
    </alternativeName>
</protein>
<evidence type="ECO:0000255" key="1">
    <source>
        <dbReference type="HAMAP-Rule" id="MF_01356"/>
    </source>
</evidence>
<accession>Q020B6</accession>